<proteinExistence type="inferred from homology"/>
<reference key="1">
    <citation type="journal article" date="2004" name="Proc. Natl. Acad. Sci. U.S.A.">
        <title>Insights into the evolution of Yersinia pestis through whole-genome comparison with Yersinia pseudotuberculosis.</title>
        <authorList>
            <person name="Chain P.S.G."/>
            <person name="Carniel E."/>
            <person name="Larimer F.W."/>
            <person name="Lamerdin J."/>
            <person name="Stoutland P.O."/>
            <person name="Regala W.M."/>
            <person name="Georgescu A.M."/>
            <person name="Vergez L.M."/>
            <person name="Land M.L."/>
            <person name="Motin V.L."/>
            <person name="Brubaker R.R."/>
            <person name="Fowler J."/>
            <person name="Hinnebusch J."/>
            <person name="Marceau M."/>
            <person name="Medigue C."/>
            <person name="Simonet M."/>
            <person name="Chenal-Francisque V."/>
            <person name="Souza B."/>
            <person name="Dacheux D."/>
            <person name="Elliott J.M."/>
            <person name="Derbise A."/>
            <person name="Hauser L.J."/>
            <person name="Garcia E."/>
        </authorList>
    </citation>
    <scope>NUCLEOTIDE SEQUENCE [LARGE SCALE GENOMIC DNA]</scope>
    <source>
        <strain>IP32953</strain>
    </source>
</reference>
<gene>
    <name evidence="1" type="primary">dnaK</name>
    <name type="ordered locus">YPTB0611</name>
</gene>
<sequence length="636" mass="69025">MGKIIGIDLGTTNSCVAIMDGTKARVLENSEGDRTTPSIIAYTQDGETLVGQPAKRQAVTNPQNTLFAIKRLIGRRFQDEEAQRDKDIMPYKIIAADNGDAWLEVKGQKMAPPQISAEVLKKMKKTAEDYLGEPVTEAVITVPAYFNDAQRQATKDAGRIAGLEVKRIINEPTAAALAYGLDKEVGNRTIAVYDLGGGTFDISIIEIDEVDGEKTFEVLATNGDTHLGGEDFDSRLINYLVEEFKKDQGMDLRTDPLAMQRLKEAAEKAKIELSSAQQTDVNLPYITADGSGPKHMNIKVTRAKLESLVEDLVNRSIEPLKVALQDAGLSVSDIQDVILVGGQTRMPMVQKKVADFFGKEPRKDVNPDEAVAIGAAVQGGVLSGEVKDVLLLDVTPLSLGIETMGGVMTPLITKNTTIPTKHSQVFSTAEDNQSAVTIHVLQGERKRAQDNKSLGQFNLDGIQPAPRGMAQIEVTFDIDADGILHVSAKDKNTGREQKITIKASSGLNEEEIQKMVRDAEANAEADRKFEELVQTRNQADHLIHGTRKQLEEAGDKLPAEDKTAIEEAMKGLEAALKGEDKAEIEAKTQALVQVSGKLLEMAQQQQAAAGGDAGDTSAKKEDDVVDAEFEEVKDKK</sequence>
<protein>
    <recommendedName>
        <fullName evidence="1">Chaperone protein DnaK</fullName>
    </recommendedName>
    <alternativeName>
        <fullName evidence="1">HSP70</fullName>
    </alternativeName>
    <alternativeName>
        <fullName evidence="1">Heat shock 70 kDa protein</fullName>
    </alternativeName>
    <alternativeName>
        <fullName evidence="1">Heat shock protein 70</fullName>
    </alternativeName>
</protein>
<comment type="function">
    <text evidence="1">Acts as a chaperone.</text>
</comment>
<comment type="induction">
    <text evidence="1">By stress conditions e.g. heat shock.</text>
</comment>
<comment type="similarity">
    <text evidence="1">Belongs to the heat shock protein 70 family.</text>
</comment>
<feature type="chain" id="PRO_0000226033" description="Chaperone protein DnaK">
    <location>
        <begin position="1"/>
        <end position="636"/>
    </location>
</feature>
<feature type="region of interest" description="Disordered" evidence="2">
    <location>
        <begin position="603"/>
        <end position="636"/>
    </location>
</feature>
<feature type="modified residue" description="Phosphothreonine; by autocatalysis" evidence="1">
    <location>
        <position position="199"/>
    </location>
</feature>
<name>DNAK_YERPS</name>
<accession>Q66ET0</accession>
<keyword id="KW-0067">ATP-binding</keyword>
<keyword id="KW-0143">Chaperone</keyword>
<keyword id="KW-0547">Nucleotide-binding</keyword>
<keyword id="KW-0597">Phosphoprotein</keyword>
<keyword id="KW-0346">Stress response</keyword>
<evidence type="ECO:0000255" key="1">
    <source>
        <dbReference type="HAMAP-Rule" id="MF_00332"/>
    </source>
</evidence>
<evidence type="ECO:0000256" key="2">
    <source>
        <dbReference type="SAM" id="MobiDB-lite"/>
    </source>
</evidence>
<dbReference type="EMBL" id="BX936398">
    <property type="protein sequence ID" value="CAH19851.1"/>
    <property type="molecule type" value="Genomic_DNA"/>
</dbReference>
<dbReference type="RefSeq" id="WP_002209248.1">
    <property type="nucleotide sequence ID" value="NZ_CP009712.1"/>
</dbReference>
<dbReference type="SMR" id="Q66ET0"/>
<dbReference type="ChEMBL" id="CHEMBL1741204"/>
<dbReference type="GeneID" id="57974141"/>
<dbReference type="KEGG" id="ypo:BZ17_1945"/>
<dbReference type="KEGG" id="yps:YPTB0611"/>
<dbReference type="PATRIC" id="fig|273123.14.peg.2069"/>
<dbReference type="Proteomes" id="UP000001011">
    <property type="component" value="Chromosome"/>
</dbReference>
<dbReference type="GO" id="GO:0005524">
    <property type="term" value="F:ATP binding"/>
    <property type="evidence" value="ECO:0007669"/>
    <property type="project" value="UniProtKB-UniRule"/>
</dbReference>
<dbReference type="GO" id="GO:0140662">
    <property type="term" value="F:ATP-dependent protein folding chaperone"/>
    <property type="evidence" value="ECO:0007669"/>
    <property type="project" value="InterPro"/>
</dbReference>
<dbReference type="GO" id="GO:0051082">
    <property type="term" value="F:unfolded protein binding"/>
    <property type="evidence" value="ECO:0007669"/>
    <property type="project" value="InterPro"/>
</dbReference>
<dbReference type="CDD" id="cd10234">
    <property type="entry name" value="ASKHA_NBD_HSP70_DnaK-like"/>
    <property type="match status" value="1"/>
</dbReference>
<dbReference type="FunFam" id="2.60.34.10:FF:000014">
    <property type="entry name" value="Chaperone protein DnaK HSP70"/>
    <property type="match status" value="1"/>
</dbReference>
<dbReference type="FunFam" id="3.30.30.30:FF:000003">
    <property type="entry name" value="Heat shock protein 9"/>
    <property type="match status" value="1"/>
</dbReference>
<dbReference type="FunFam" id="1.20.1270.10:FF:000001">
    <property type="entry name" value="Molecular chaperone DnaK"/>
    <property type="match status" value="1"/>
</dbReference>
<dbReference type="FunFam" id="3.30.420.40:FF:000004">
    <property type="entry name" value="Molecular chaperone DnaK"/>
    <property type="match status" value="1"/>
</dbReference>
<dbReference type="FunFam" id="3.90.640.10:FF:000003">
    <property type="entry name" value="Molecular chaperone DnaK"/>
    <property type="match status" value="1"/>
</dbReference>
<dbReference type="Gene3D" id="1.20.1270.10">
    <property type="match status" value="1"/>
</dbReference>
<dbReference type="Gene3D" id="3.30.420.40">
    <property type="match status" value="2"/>
</dbReference>
<dbReference type="Gene3D" id="3.90.640.10">
    <property type="entry name" value="Actin, Chain A, domain 4"/>
    <property type="match status" value="1"/>
</dbReference>
<dbReference type="Gene3D" id="2.60.34.10">
    <property type="entry name" value="Substrate Binding Domain Of DNAk, Chain A, domain 1"/>
    <property type="match status" value="1"/>
</dbReference>
<dbReference type="HAMAP" id="MF_00332">
    <property type="entry name" value="DnaK"/>
    <property type="match status" value="1"/>
</dbReference>
<dbReference type="InterPro" id="IPR043129">
    <property type="entry name" value="ATPase_NBD"/>
</dbReference>
<dbReference type="InterPro" id="IPR012725">
    <property type="entry name" value="Chaperone_DnaK"/>
</dbReference>
<dbReference type="InterPro" id="IPR018181">
    <property type="entry name" value="Heat_shock_70_CS"/>
</dbReference>
<dbReference type="InterPro" id="IPR029048">
    <property type="entry name" value="HSP70_C_sf"/>
</dbReference>
<dbReference type="InterPro" id="IPR029047">
    <property type="entry name" value="HSP70_peptide-bd_sf"/>
</dbReference>
<dbReference type="InterPro" id="IPR013126">
    <property type="entry name" value="Hsp_70_fam"/>
</dbReference>
<dbReference type="NCBIfam" id="NF001413">
    <property type="entry name" value="PRK00290.1"/>
    <property type="match status" value="1"/>
</dbReference>
<dbReference type="NCBIfam" id="NF003520">
    <property type="entry name" value="PRK05183.1"/>
    <property type="match status" value="1"/>
</dbReference>
<dbReference type="NCBIfam" id="TIGR02350">
    <property type="entry name" value="prok_dnaK"/>
    <property type="match status" value="1"/>
</dbReference>
<dbReference type="PANTHER" id="PTHR19375">
    <property type="entry name" value="HEAT SHOCK PROTEIN 70KDA"/>
    <property type="match status" value="1"/>
</dbReference>
<dbReference type="Pfam" id="PF00012">
    <property type="entry name" value="HSP70"/>
    <property type="match status" value="1"/>
</dbReference>
<dbReference type="PRINTS" id="PR00301">
    <property type="entry name" value="HEATSHOCK70"/>
</dbReference>
<dbReference type="SUPFAM" id="SSF53067">
    <property type="entry name" value="Actin-like ATPase domain"/>
    <property type="match status" value="2"/>
</dbReference>
<dbReference type="SUPFAM" id="SSF100934">
    <property type="entry name" value="Heat shock protein 70kD (HSP70), C-terminal subdomain"/>
    <property type="match status" value="1"/>
</dbReference>
<dbReference type="SUPFAM" id="SSF100920">
    <property type="entry name" value="Heat shock protein 70kD (HSP70), peptide-binding domain"/>
    <property type="match status" value="1"/>
</dbReference>
<dbReference type="PROSITE" id="PS00297">
    <property type="entry name" value="HSP70_1"/>
    <property type="match status" value="1"/>
</dbReference>
<dbReference type="PROSITE" id="PS00329">
    <property type="entry name" value="HSP70_2"/>
    <property type="match status" value="1"/>
</dbReference>
<dbReference type="PROSITE" id="PS01036">
    <property type="entry name" value="HSP70_3"/>
    <property type="match status" value="1"/>
</dbReference>
<organism>
    <name type="scientific">Yersinia pseudotuberculosis serotype I (strain IP32953)</name>
    <dbReference type="NCBI Taxonomy" id="273123"/>
    <lineage>
        <taxon>Bacteria</taxon>
        <taxon>Pseudomonadati</taxon>
        <taxon>Pseudomonadota</taxon>
        <taxon>Gammaproteobacteria</taxon>
        <taxon>Enterobacterales</taxon>
        <taxon>Yersiniaceae</taxon>
        <taxon>Yersinia</taxon>
    </lineage>
</organism>